<comment type="function">
    <text evidence="1">Cleaves peptides in various proteins in a process that requires ATP hydrolysis. Has a chymotrypsin-like activity. Plays a major role in the degradation of misfolded proteins.</text>
</comment>
<comment type="catalytic activity">
    <reaction evidence="1">
        <text>Hydrolysis of proteins to small peptides in the presence of ATP and magnesium. alpha-casein is the usual test substrate. In the absence of ATP, only oligopeptides shorter than five residues are hydrolyzed (such as succinyl-Leu-Tyr-|-NHMec, and Leu-Tyr-Leu-|-Tyr-Trp, in which cleavage of the -Tyr-|-Leu- and -Tyr-|-Trp bonds also occurs).</text>
        <dbReference type="EC" id="3.4.21.92"/>
    </reaction>
</comment>
<comment type="subunit">
    <text evidence="1">Fourteen ClpP subunits assemble into 2 heptameric rings which stack back to back to give a disk-like structure with a central cavity, resembling the structure of eukaryotic proteasomes. Component of the ClpAP and ClpXP complexes.</text>
</comment>
<comment type="subcellular location">
    <subcellularLocation>
        <location evidence="1">Cytoplasm</location>
    </subcellularLocation>
</comment>
<comment type="similarity">
    <text evidence="1">Belongs to the peptidase S14 family.</text>
</comment>
<gene>
    <name evidence="1" type="primary">clpP</name>
    <name type="ordered locus">SFV_0411</name>
</gene>
<feature type="chain" id="PRO_1000026132" description="ATP-dependent Clp protease proteolytic subunit">
    <location>
        <begin position="1"/>
        <end position="207"/>
    </location>
</feature>
<feature type="active site" description="Nucleophile" evidence="1">
    <location>
        <position position="111"/>
    </location>
</feature>
<feature type="active site" evidence="1">
    <location>
        <position position="136"/>
    </location>
</feature>
<keyword id="KW-0963">Cytoplasm</keyword>
<keyword id="KW-0378">Hydrolase</keyword>
<keyword id="KW-0645">Protease</keyword>
<keyword id="KW-0720">Serine protease</keyword>
<accession>Q0T7E6</accession>
<proteinExistence type="inferred from homology"/>
<sequence>MSYSGERDNFAPHMALVPMVIEQTSRGERSFDIYSRLLKERVIFLTGQVEDHMANLIVAQMLFLEAENPEKDIYLYINSPGGVITAGMSIYDTMQFIKPDVSTICMGQAASMGAFLLTAGAKGKRFCLPNSRVMIHQPLGGYQGQATDIEIHAREILKVKGRMNELMALHTGQSLEQIERDTERDRFLSAPEAVEYGLVDSILTHRN</sequence>
<name>CLPP_SHIF8</name>
<dbReference type="EC" id="3.4.21.92" evidence="1"/>
<dbReference type="EMBL" id="CP000266">
    <property type="protein sequence ID" value="ABF02680.1"/>
    <property type="molecule type" value="Genomic_DNA"/>
</dbReference>
<dbReference type="RefSeq" id="WP_000122253.1">
    <property type="nucleotide sequence ID" value="NC_008258.1"/>
</dbReference>
<dbReference type="SMR" id="Q0T7E6"/>
<dbReference type="MEROPS" id="S14.001"/>
<dbReference type="GeneID" id="93777017"/>
<dbReference type="KEGG" id="sfv:SFV_0411"/>
<dbReference type="HOGENOM" id="CLU_058707_3_2_6"/>
<dbReference type="Proteomes" id="UP000000659">
    <property type="component" value="Chromosome"/>
</dbReference>
<dbReference type="GO" id="GO:0005737">
    <property type="term" value="C:cytoplasm"/>
    <property type="evidence" value="ECO:0007669"/>
    <property type="project" value="UniProtKB-SubCell"/>
</dbReference>
<dbReference type="GO" id="GO:0009368">
    <property type="term" value="C:endopeptidase Clp complex"/>
    <property type="evidence" value="ECO:0007669"/>
    <property type="project" value="TreeGrafter"/>
</dbReference>
<dbReference type="GO" id="GO:0004176">
    <property type="term" value="F:ATP-dependent peptidase activity"/>
    <property type="evidence" value="ECO:0007669"/>
    <property type="project" value="InterPro"/>
</dbReference>
<dbReference type="GO" id="GO:0051117">
    <property type="term" value="F:ATPase binding"/>
    <property type="evidence" value="ECO:0007669"/>
    <property type="project" value="TreeGrafter"/>
</dbReference>
<dbReference type="GO" id="GO:0004252">
    <property type="term" value="F:serine-type endopeptidase activity"/>
    <property type="evidence" value="ECO:0007669"/>
    <property type="project" value="UniProtKB-UniRule"/>
</dbReference>
<dbReference type="GO" id="GO:0006515">
    <property type="term" value="P:protein quality control for misfolded or incompletely synthesized proteins"/>
    <property type="evidence" value="ECO:0007669"/>
    <property type="project" value="TreeGrafter"/>
</dbReference>
<dbReference type="CDD" id="cd07017">
    <property type="entry name" value="S14_ClpP_2"/>
    <property type="match status" value="1"/>
</dbReference>
<dbReference type="FunFam" id="3.90.226.10:FF:000001">
    <property type="entry name" value="ATP-dependent Clp protease proteolytic subunit"/>
    <property type="match status" value="1"/>
</dbReference>
<dbReference type="Gene3D" id="3.90.226.10">
    <property type="entry name" value="2-enoyl-CoA Hydratase, Chain A, domain 1"/>
    <property type="match status" value="1"/>
</dbReference>
<dbReference type="HAMAP" id="MF_00444">
    <property type="entry name" value="ClpP"/>
    <property type="match status" value="1"/>
</dbReference>
<dbReference type="InterPro" id="IPR001907">
    <property type="entry name" value="ClpP"/>
</dbReference>
<dbReference type="InterPro" id="IPR029045">
    <property type="entry name" value="ClpP/crotonase-like_dom_sf"/>
</dbReference>
<dbReference type="InterPro" id="IPR023562">
    <property type="entry name" value="ClpP/TepA"/>
</dbReference>
<dbReference type="InterPro" id="IPR033135">
    <property type="entry name" value="ClpP_His_AS"/>
</dbReference>
<dbReference type="InterPro" id="IPR018215">
    <property type="entry name" value="ClpP_Ser_AS"/>
</dbReference>
<dbReference type="NCBIfam" id="TIGR00493">
    <property type="entry name" value="clpP"/>
    <property type="match status" value="1"/>
</dbReference>
<dbReference type="NCBIfam" id="NF001368">
    <property type="entry name" value="PRK00277.1"/>
    <property type="match status" value="1"/>
</dbReference>
<dbReference type="NCBIfam" id="NF009205">
    <property type="entry name" value="PRK12553.1"/>
    <property type="match status" value="1"/>
</dbReference>
<dbReference type="PANTHER" id="PTHR10381">
    <property type="entry name" value="ATP-DEPENDENT CLP PROTEASE PROTEOLYTIC SUBUNIT"/>
    <property type="match status" value="1"/>
</dbReference>
<dbReference type="PANTHER" id="PTHR10381:SF70">
    <property type="entry name" value="ATP-DEPENDENT CLP PROTEASE PROTEOLYTIC SUBUNIT"/>
    <property type="match status" value="1"/>
</dbReference>
<dbReference type="Pfam" id="PF00574">
    <property type="entry name" value="CLP_protease"/>
    <property type="match status" value="1"/>
</dbReference>
<dbReference type="PRINTS" id="PR00127">
    <property type="entry name" value="CLPPROTEASEP"/>
</dbReference>
<dbReference type="SUPFAM" id="SSF52096">
    <property type="entry name" value="ClpP/crotonase"/>
    <property type="match status" value="1"/>
</dbReference>
<dbReference type="PROSITE" id="PS00382">
    <property type="entry name" value="CLP_PROTEASE_HIS"/>
    <property type="match status" value="1"/>
</dbReference>
<dbReference type="PROSITE" id="PS00381">
    <property type="entry name" value="CLP_PROTEASE_SER"/>
    <property type="match status" value="1"/>
</dbReference>
<organism>
    <name type="scientific">Shigella flexneri serotype 5b (strain 8401)</name>
    <dbReference type="NCBI Taxonomy" id="373384"/>
    <lineage>
        <taxon>Bacteria</taxon>
        <taxon>Pseudomonadati</taxon>
        <taxon>Pseudomonadota</taxon>
        <taxon>Gammaproteobacteria</taxon>
        <taxon>Enterobacterales</taxon>
        <taxon>Enterobacteriaceae</taxon>
        <taxon>Shigella</taxon>
    </lineage>
</organism>
<evidence type="ECO:0000255" key="1">
    <source>
        <dbReference type="HAMAP-Rule" id="MF_00444"/>
    </source>
</evidence>
<protein>
    <recommendedName>
        <fullName evidence="1">ATP-dependent Clp protease proteolytic subunit</fullName>
        <ecNumber evidence="1">3.4.21.92</ecNumber>
    </recommendedName>
    <alternativeName>
        <fullName evidence="1">Endopeptidase Clp</fullName>
    </alternativeName>
</protein>
<reference key="1">
    <citation type="journal article" date="2006" name="BMC Genomics">
        <title>Complete genome sequence of Shigella flexneri 5b and comparison with Shigella flexneri 2a.</title>
        <authorList>
            <person name="Nie H."/>
            <person name="Yang F."/>
            <person name="Zhang X."/>
            <person name="Yang J."/>
            <person name="Chen L."/>
            <person name="Wang J."/>
            <person name="Xiong Z."/>
            <person name="Peng J."/>
            <person name="Sun L."/>
            <person name="Dong J."/>
            <person name="Xue Y."/>
            <person name="Xu X."/>
            <person name="Chen S."/>
            <person name="Yao Z."/>
            <person name="Shen Y."/>
            <person name="Jin Q."/>
        </authorList>
    </citation>
    <scope>NUCLEOTIDE SEQUENCE [LARGE SCALE GENOMIC DNA]</scope>
    <source>
        <strain>8401</strain>
    </source>
</reference>